<organism>
    <name type="scientific">Methanopyrus kandleri (strain AV19 / DSM 6324 / JCM 9639 / NBRC 100938)</name>
    <dbReference type="NCBI Taxonomy" id="190192"/>
    <lineage>
        <taxon>Archaea</taxon>
        <taxon>Methanobacteriati</taxon>
        <taxon>Methanobacteriota</taxon>
        <taxon>Methanomada group</taxon>
        <taxon>Methanopyri</taxon>
        <taxon>Methanopyrales</taxon>
        <taxon>Methanopyraceae</taxon>
        <taxon>Methanopyrus</taxon>
    </lineage>
</organism>
<sequence length="374" mass="42733">MIDPWDVEEVDYERLTEEFGIRPIDEKVRELLPRRFPLLDRGIVFGHRDYDSFLKDYNDGKLVSVLSGMMPSGRMHLGHKTVVDQLVFYQQEMDVKVYVPIADLEAHHARNMDLDRAHRIAVEEYVLNYAALGLDLDPDRCEIYLQSERKTVQRMALLLAGRLTWNTVKNTYGFTGETNMGHAFAPIVQAADILHPQEIEGPHRVLVPVGVDQDPHLRLTRDIAEKEDLIKPASTYHRFMTGLTGGKMSSSKPNTAIFLTDDPETAKEKVWNAKTGGGATLEEHREHGGNPDECVVYELMVYHLADRIGGDEKLREIRKKCREGDIICGECKRMVGEALAEILEELERRREDVRDELPDLLSQHPDAPEVPEDW</sequence>
<proteinExistence type="inferred from homology"/>
<dbReference type="EC" id="6.1.1.2" evidence="1"/>
<dbReference type="EMBL" id="AE009439">
    <property type="protein sequence ID" value="AAM01558.1"/>
    <property type="molecule type" value="Genomic_DNA"/>
</dbReference>
<dbReference type="RefSeq" id="WP_011018713.1">
    <property type="nucleotide sequence ID" value="NC_003551.1"/>
</dbReference>
<dbReference type="SMR" id="Q8TYF7"/>
<dbReference type="FunCoup" id="Q8TYF7">
    <property type="interactions" value="239"/>
</dbReference>
<dbReference type="STRING" id="190192.MK0343"/>
<dbReference type="PaxDb" id="190192-MK0343"/>
<dbReference type="EnsemblBacteria" id="AAM01558">
    <property type="protein sequence ID" value="AAM01558"/>
    <property type="gene ID" value="MK0343"/>
</dbReference>
<dbReference type="GeneID" id="1477646"/>
<dbReference type="KEGG" id="mka:MK0343"/>
<dbReference type="PATRIC" id="fig|190192.8.peg.364"/>
<dbReference type="HOGENOM" id="CLU_032621_3_0_2"/>
<dbReference type="InParanoid" id="Q8TYF7"/>
<dbReference type="OrthoDB" id="371821at2157"/>
<dbReference type="Proteomes" id="UP000001826">
    <property type="component" value="Chromosome"/>
</dbReference>
<dbReference type="GO" id="GO:0005737">
    <property type="term" value="C:cytoplasm"/>
    <property type="evidence" value="ECO:0007669"/>
    <property type="project" value="UniProtKB-SubCell"/>
</dbReference>
<dbReference type="GO" id="GO:0005524">
    <property type="term" value="F:ATP binding"/>
    <property type="evidence" value="ECO:0007669"/>
    <property type="project" value="UniProtKB-UniRule"/>
</dbReference>
<dbReference type="GO" id="GO:0004830">
    <property type="term" value="F:tryptophan-tRNA ligase activity"/>
    <property type="evidence" value="ECO:0007669"/>
    <property type="project" value="UniProtKB-UniRule"/>
</dbReference>
<dbReference type="GO" id="GO:0006436">
    <property type="term" value="P:tryptophanyl-tRNA aminoacylation"/>
    <property type="evidence" value="ECO:0007669"/>
    <property type="project" value="UniProtKB-UniRule"/>
</dbReference>
<dbReference type="CDD" id="cd00806">
    <property type="entry name" value="TrpRS_core"/>
    <property type="match status" value="1"/>
</dbReference>
<dbReference type="FunFam" id="1.10.240.10:FF:000007">
    <property type="entry name" value="Tryptophan--tRNA ligase"/>
    <property type="match status" value="1"/>
</dbReference>
<dbReference type="FunFam" id="3.40.50.620:FF:000207">
    <property type="entry name" value="Tryptophan--tRNA ligase"/>
    <property type="match status" value="1"/>
</dbReference>
<dbReference type="Gene3D" id="3.40.50.620">
    <property type="entry name" value="HUPs"/>
    <property type="match status" value="1"/>
</dbReference>
<dbReference type="Gene3D" id="1.10.240.10">
    <property type="entry name" value="Tyrosyl-Transfer RNA Synthetase"/>
    <property type="match status" value="1"/>
</dbReference>
<dbReference type="HAMAP" id="MF_00140_A">
    <property type="entry name" value="Trp_tRNA_synth_A"/>
    <property type="match status" value="1"/>
</dbReference>
<dbReference type="InterPro" id="IPR002305">
    <property type="entry name" value="aa-tRNA-synth_Ic"/>
</dbReference>
<dbReference type="InterPro" id="IPR014729">
    <property type="entry name" value="Rossmann-like_a/b/a_fold"/>
</dbReference>
<dbReference type="InterPro" id="IPR002306">
    <property type="entry name" value="Trp-tRNA-ligase"/>
</dbReference>
<dbReference type="InterPro" id="IPR020653">
    <property type="entry name" value="Tryptophan-tRNA-ligase_arc"/>
</dbReference>
<dbReference type="NCBIfam" id="NF008925">
    <property type="entry name" value="PRK12285.1-2"/>
    <property type="match status" value="1"/>
</dbReference>
<dbReference type="NCBIfam" id="TIGR00233">
    <property type="entry name" value="trpS"/>
    <property type="match status" value="1"/>
</dbReference>
<dbReference type="PANTHER" id="PTHR10055:SF5">
    <property type="entry name" value="TRYPTOPHAN--TRNA LIGASE"/>
    <property type="match status" value="1"/>
</dbReference>
<dbReference type="PANTHER" id="PTHR10055">
    <property type="entry name" value="TRYPTOPHANYL-TRNA SYNTHETASE"/>
    <property type="match status" value="1"/>
</dbReference>
<dbReference type="Pfam" id="PF00579">
    <property type="entry name" value="tRNA-synt_1b"/>
    <property type="match status" value="1"/>
</dbReference>
<dbReference type="PRINTS" id="PR01039">
    <property type="entry name" value="TRNASYNTHTRP"/>
</dbReference>
<dbReference type="SUPFAM" id="SSF52374">
    <property type="entry name" value="Nucleotidylyl transferase"/>
    <property type="match status" value="1"/>
</dbReference>
<accession>Q8TYF7</accession>
<comment type="catalytic activity">
    <reaction evidence="1">
        <text>tRNA(Trp) + L-tryptophan + ATP = L-tryptophyl-tRNA(Trp) + AMP + diphosphate + H(+)</text>
        <dbReference type="Rhea" id="RHEA:24080"/>
        <dbReference type="Rhea" id="RHEA-COMP:9671"/>
        <dbReference type="Rhea" id="RHEA-COMP:9705"/>
        <dbReference type="ChEBI" id="CHEBI:15378"/>
        <dbReference type="ChEBI" id="CHEBI:30616"/>
        <dbReference type="ChEBI" id="CHEBI:33019"/>
        <dbReference type="ChEBI" id="CHEBI:57912"/>
        <dbReference type="ChEBI" id="CHEBI:78442"/>
        <dbReference type="ChEBI" id="CHEBI:78535"/>
        <dbReference type="ChEBI" id="CHEBI:456215"/>
        <dbReference type="EC" id="6.1.1.2"/>
    </reaction>
</comment>
<comment type="subcellular location">
    <subcellularLocation>
        <location evidence="1">Cytoplasm</location>
    </subcellularLocation>
</comment>
<comment type="similarity">
    <text evidence="1">Belongs to the class-I aminoacyl-tRNA synthetase family.</text>
</comment>
<protein>
    <recommendedName>
        <fullName evidence="1">Tryptophan--tRNA ligase</fullName>
        <ecNumber evidence="1">6.1.1.2</ecNumber>
    </recommendedName>
    <alternativeName>
        <fullName evidence="1">Tryptophanyl-tRNA synthetase</fullName>
        <shortName evidence="1">TrpRS</shortName>
    </alternativeName>
</protein>
<reference key="1">
    <citation type="journal article" date="2002" name="Proc. Natl. Acad. Sci. U.S.A.">
        <title>The complete genome of hyperthermophile Methanopyrus kandleri AV19 and monophyly of archaeal methanogens.</title>
        <authorList>
            <person name="Slesarev A.I."/>
            <person name="Mezhevaya K.V."/>
            <person name="Makarova K.S."/>
            <person name="Polushin N.N."/>
            <person name="Shcherbinina O.V."/>
            <person name="Shakhova V.V."/>
            <person name="Belova G.I."/>
            <person name="Aravind L."/>
            <person name="Natale D.A."/>
            <person name="Rogozin I.B."/>
            <person name="Tatusov R.L."/>
            <person name="Wolf Y.I."/>
            <person name="Stetter K.O."/>
            <person name="Malykh A.G."/>
            <person name="Koonin E.V."/>
            <person name="Kozyavkin S.A."/>
        </authorList>
    </citation>
    <scope>NUCLEOTIDE SEQUENCE [LARGE SCALE GENOMIC DNA]</scope>
    <source>
        <strain>AV19 / DSM 6324 / JCM 9639 / NBRC 100938</strain>
    </source>
</reference>
<gene>
    <name evidence="1" type="primary">trpS</name>
    <name type="ordered locus">MK0343</name>
</gene>
<evidence type="ECO:0000255" key="1">
    <source>
        <dbReference type="HAMAP-Rule" id="MF_00140"/>
    </source>
</evidence>
<keyword id="KW-0030">Aminoacyl-tRNA synthetase</keyword>
<keyword id="KW-0067">ATP-binding</keyword>
<keyword id="KW-0963">Cytoplasm</keyword>
<keyword id="KW-0436">Ligase</keyword>
<keyword id="KW-0547">Nucleotide-binding</keyword>
<keyword id="KW-0648">Protein biosynthesis</keyword>
<keyword id="KW-1185">Reference proteome</keyword>
<feature type="chain" id="PRO_0000136724" description="Tryptophan--tRNA ligase">
    <location>
        <begin position="1"/>
        <end position="374"/>
    </location>
</feature>
<feature type="short sequence motif" description="'HIGH' region">
    <location>
        <begin position="71"/>
        <end position="79"/>
    </location>
</feature>
<feature type="short sequence motif" description="'KMSKS' region">
    <location>
        <begin position="247"/>
        <end position="251"/>
    </location>
</feature>
<name>SYW_METKA</name>